<dbReference type="EC" id="1.3.7.7"/>
<dbReference type="EMBL" id="L25775">
    <property type="protein sequence ID" value="AAC37498.1"/>
    <property type="molecule type" value="Genomic_DNA"/>
</dbReference>
<dbReference type="SMR" id="P37855"/>
<dbReference type="UniPathway" id="UPA00670"/>
<dbReference type="GO" id="GO:0009507">
    <property type="term" value="C:chloroplast"/>
    <property type="evidence" value="ECO:0007669"/>
    <property type="project" value="UniProtKB-SubCell"/>
</dbReference>
<dbReference type="GO" id="GO:0051539">
    <property type="term" value="F:4 iron, 4 sulfur cluster binding"/>
    <property type="evidence" value="ECO:0007669"/>
    <property type="project" value="UniProtKB-KW"/>
</dbReference>
<dbReference type="GO" id="GO:0005524">
    <property type="term" value="F:ATP binding"/>
    <property type="evidence" value="ECO:0007669"/>
    <property type="project" value="UniProtKB-KW"/>
</dbReference>
<dbReference type="GO" id="GO:0046872">
    <property type="term" value="F:metal ion binding"/>
    <property type="evidence" value="ECO:0007669"/>
    <property type="project" value="UniProtKB-KW"/>
</dbReference>
<dbReference type="GO" id="GO:0016491">
    <property type="term" value="F:oxidoreductase activity"/>
    <property type="evidence" value="ECO:0007669"/>
    <property type="project" value="UniProtKB-KW"/>
</dbReference>
<dbReference type="GO" id="GO:0036068">
    <property type="term" value="P:light-independent chlorophyll biosynthetic process"/>
    <property type="evidence" value="ECO:0007669"/>
    <property type="project" value="UniProtKB-UniPathway"/>
</dbReference>
<dbReference type="GO" id="GO:0015979">
    <property type="term" value="P:photosynthesis"/>
    <property type="evidence" value="ECO:0007669"/>
    <property type="project" value="UniProtKB-KW"/>
</dbReference>
<dbReference type="Gene3D" id="3.40.50.1980">
    <property type="entry name" value="Nitrogenase molybdenum iron protein domain"/>
    <property type="match status" value="1"/>
</dbReference>
<dbReference type="InterPro" id="IPR050152">
    <property type="entry name" value="ChlB/BchB/BchZ"/>
</dbReference>
<dbReference type="InterPro" id="IPR000510">
    <property type="entry name" value="Nase/OxRdtase_comp1"/>
</dbReference>
<dbReference type="PANTHER" id="PTHR33712">
    <property type="entry name" value="LIGHT-INDEPENDENT PROTOCHLOROPHYLLIDE REDUCTASE SUBUNIT B"/>
    <property type="match status" value="1"/>
</dbReference>
<dbReference type="PANTHER" id="PTHR33712:SF7">
    <property type="entry name" value="LIGHT-INDEPENDENT PROTOCHLOROPHYLLIDE REDUCTASE SUBUNIT B"/>
    <property type="match status" value="1"/>
</dbReference>
<dbReference type="Pfam" id="PF00148">
    <property type="entry name" value="Oxidored_nitro"/>
    <property type="match status" value="1"/>
</dbReference>
<dbReference type="SUPFAM" id="SSF53807">
    <property type="entry name" value="Helical backbone' metal receptor"/>
    <property type="match status" value="1"/>
</dbReference>
<proteinExistence type="inferred from homology"/>
<protein>
    <recommendedName>
        <fullName>Light-independent protochlorophyllide reductase subunit B</fullName>
        <shortName>DPOR subunit B</shortName>
        <shortName>LI-POR subunit B</shortName>
        <ecNumber>1.3.7.7</ecNumber>
    </recommendedName>
</protein>
<reference key="1">
    <citation type="journal article" date="1996" name="Mol. Phylogenet. Evol.">
        <title>Phylogenetic inferences from chloroplast chlB gene sequences of Nephrolepis exaltata (Filicopsida), Ephedra altissima (Gnetopsida), and diverse land plants.</title>
        <authorList>
            <person name="Boivin R."/>
            <person name="Richard M."/>
            <person name="Beauseigle D."/>
            <person name="Bousquet J."/>
            <person name="Bellemare G."/>
        </authorList>
    </citation>
    <scope>NUCLEOTIDE SEQUENCE [GENOMIC DNA]</scope>
</reference>
<feature type="chain" id="PRO_0000219843" description="Light-independent protochlorophyllide reductase subunit B">
    <location>
        <begin position="1" status="less than"/>
        <end position="103" status="greater than"/>
    </location>
</feature>
<feature type="non-terminal residue">
    <location>
        <position position="1"/>
    </location>
</feature>
<feature type="non-terminal residue">
    <location>
        <position position="103"/>
    </location>
</feature>
<sequence length="103" mass="11770">KRSLRDLGILVNQIIPEGGSLKCLKDLPRAWFNVVPYREVGLMTAIFLEKEYGMPYVSVTPMGILDTAEFVRQMERLVNAWASVLPEKQANYSSYIKDQTNFV</sequence>
<organism>
    <name type="scientific">Salvinia auriculata</name>
    <name type="common">Eared water-moss</name>
    <name type="synonym">Salvinia rotundifolia</name>
    <dbReference type="NCBI Taxonomy" id="34166"/>
    <lineage>
        <taxon>Eukaryota</taxon>
        <taxon>Viridiplantae</taxon>
        <taxon>Streptophyta</taxon>
        <taxon>Embryophyta</taxon>
        <taxon>Tracheophyta</taxon>
        <taxon>Polypodiopsida</taxon>
        <taxon>Polypodiidae</taxon>
        <taxon>Salviniales</taxon>
        <taxon>Salviniaceae</taxon>
        <taxon>Salvinia</taxon>
    </lineage>
</organism>
<evidence type="ECO:0000250" key="1"/>
<evidence type="ECO:0000305" key="2"/>
<geneLocation type="chloroplast"/>
<name>CHLB_SALAU</name>
<keyword id="KW-0004">4Fe-4S</keyword>
<keyword id="KW-0067">ATP-binding</keyword>
<keyword id="KW-0149">Chlorophyll biosynthesis</keyword>
<keyword id="KW-0150">Chloroplast</keyword>
<keyword id="KW-0408">Iron</keyword>
<keyword id="KW-0411">Iron-sulfur</keyword>
<keyword id="KW-0479">Metal-binding</keyword>
<keyword id="KW-0547">Nucleotide-binding</keyword>
<keyword id="KW-0560">Oxidoreductase</keyword>
<keyword id="KW-0602">Photosynthesis</keyword>
<keyword id="KW-0934">Plastid</keyword>
<accession>P37855</accession>
<gene>
    <name type="primary">chlB</name>
</gene>
<comment type="function">
    <text evidence="1">Component of the dark-operative protochlorophyllide reductase (DPOR) that uses Mg-ATP and reduced ferredoxin to reduce ring D of protochlorophyllide (Pchlide) to form chlorophyllide a (Chlide). This reaction is light-independent. The NB-protein (ChlN-ChlB) is the catalytic component of the complex (By similarity).</text>
</comment>
<comment type="catalytic activity">
    <reaction>
        <text>chlorophyllide a + oxidized 2[4Fe-4S]-[ferredoxin] + 2 ADP + 2 phosphate = protochlorophyllide a + reduced 2[4Fe-4S]-[ferredoxin] + 2 ATP + 2 H2O</text>
        <dbReference type="Rhea" id="RHEA:28202"/>
        <dbReference type="Rhea" id="RHEA-COMP:10002"/>
        <dbReference type="Rhea" id="RHEA-COMP:10004"/>
        <dbReference type="ChEBI" id="CHEBI:15377"/>
        <dbReference type="ChEBI" id="CHEBI:30616"/>
        <dbReference type="ChEBI" id="CHEBI:33722"/>
        <dbReference type="ChEBI" id="CHEBI:33723"/>
        <dbReference type="ChEBI" id="CHEBI:43474"/>
        <dbReference type="ChEBI" id="CHEBI:83348"/>
        <dbReference type="ChEBI" id="CHEBI:83350"/>
        <dbReference type="ChEBI" id="CHEBI:456216"/>
        <dbReference type="EC" id="1.3.7.7"/>
    </reaction>
</comment>
<comment type="cofactor">
    <cofactor evidence="1">
        <name>[4Fe-4S] cluster</name>
        <dbReference type="ChEBI" id="CHEBI:49883"/>
    </cofactor>
    <text evidence="1">Binds 1 [4Fe-4S] cluster per heterodimer. The cluster is bound at the heterodimer interface by residues from both subunits.</text>
</comment>
<comment type="pathway">
    <text>Porphyrin-containing compound metabolism; chlorophyll biosynthesis (light-independent).</text>
</comment>
<comment type="subunit">
    <text evidence="1">Protochlorophyllide reductase is composed of three subunits; ChlL, ChlN and ChlB. Forms a heterotetramer of two ChlB and two ChlN subunits (By similarity).</text>
</comment>
<comment type="subcellular location">
    <subcellularLocation>
        <location>Plastid</location>
        <location>Chloroplast</location>
    </subcellularLocation>
</comment>
<comment type="similarity">
    <text evidence="2">Belongs to the ChlB/BchB/BchZ family.</text>
</comment>